<evidence type="ECO:0000250" key="1"/>
<evidence type="ECO:0000269" key="2">
    <source>
    </source>
</evidence>
<evidence type="ECO:0000303" key="3">
    <source>
    </source>
</evidence>
<evidence type="ECO:0000305" key="4"/>
<evidence type="ECO:0000305" key="5">
    <source>
    </source>
</evidence>
<evidence type="ECO:0000305" key="6">
    <source>
    </source>
</evidence>
<evidence type="ECO:0007744" key="7">
    <source>
        <dbReference type="PDB" id="4V4R"/>
    </source>
</evidence>
<comment type="function">
    <text evidence="5 6">Peptide chain release factor 1 directs the termination of translation in response to the peptide chain termination codons UAG and UAA (Probable).</text>
</comment>
<comment type="subunit">
    <text evidence="2">Interacts with the ribosome (PubMed:16377566).</text>
</comment>
<comment type="subcellular location">
    <subcellularLocation>
        <location evidence="1">Cytoplasm</location>
    </subcellularLocation>
</comment>
<comment type="PTM">
    <text evidence="1">Methylated by PrmC. Methylation increases the termination efficiency of RF1 (By similarity).</text>
</comment>
<comment type="similarity">
    <text evidence="4">Belongs to the prokaryotic/mitochondrial release factor family.</text>
</comment>
<dbReference type="EMBL" id="D87366">
    <property type="protein sequence ID" value="BAA13349.1"/>
    <property type="molecule type" value="Genomic_DNA"/>
</dbReference>
<dbReference type="EMBL" id="AP008226">
    <property type="protein sequence ID" value="BAD71763.1"/>
    <property type="molecule type" value="Genomic_DNA"/>
</dbReference>
<dbReference type="RefSeq" id="WP_011173949.1">
    <property type="nucleotide sequence ID" value="NC_006461.1"/>
</dbReference>
<dbReference type="RefSeq" id="YP_145206.1">
    <property type="nucleotide sequence ID" value="NC_006461.1"/>
</dbReference>
<dbReference type="PDB" id="4V4R">
    <property type="method" value="X-ray"/>
    <property type="resolution" value="5.90 A"/>
    <property type="chains" value="AY=1-354"/>
</dbReference>
<dbReference type="PDB" id="9D7R">
    <property type="method" value="X-ray"/>
    <property type="resolution" value="2.70 A"/>
    <property type="chains" value="1w/2w=1-354"/>
</dbReference>
<dbReference type="PDB" id="9D7S">
    <property type="method" value="X-ray"/>
    <property type="resolution" value="2.85 A"/>
    <property type="chains" value="1w/2w=1-354"/>
</dbReference>
<dbReference type="PDB" id="9D7T">
    <property type="method" value="X-ray"/>
    <property type="resolution" value="2.70 A"/>
    <property type="chains" value="1w/2w=1-354"/>
</dbReference>
<dbReference type="PDBsum" id="4V4R"/>
<dbReference type="PDBsum" id="9D7R"/>
<dbReference type="PDBsum" id="9D7S"/>
<dbReference type="PDBsum" id="9D7T"/>
<dbReference type="SMR" id="P96077"/>
<dbReference type="EnsemblBacteria" id="BAD71763">
    <property type="protein sequence ID" value="BAD71763"/>
    <property type="gene ID" value="BAD71763"/>
</dbReference>
<dbReference type="GeneID" id="3169506"/>
<dbReference type="KEGG" id="ttj:TTHA1940"/>
<dbReference type="PATRIC" id="fig|300852.9.peg.1911"/>
<dbReference type="eggNOG" id="COG0216">
    <property type="taxonomic scope" value="Bacteria"/>
</dbReference>
<dbReference type="HOGENOM" id="CLU_036856_0_1_0"/>
<dbReference type="PhylomeDB" id="P96077"/>
<dbReference type="Proteomes" id="UP000000532">
    <property type="component" value="Chromosome"/>
</dbReference>
<dbReference type="GO" id="GO:0005737">
    <property type="term" value="C:cytoplasm"/>
    <property type="evidence" value="ECO:0007669"/>
    <property type="project" value="UniProtKB-SubCell"/>
</dbReference>
<dbReference type="GO" id="GO:0016149">
    <property type="term" value="F:translation release factor activity, codon specific"/>
    <property type="evidence" value="ECO:0007669"/>
    <property type="project" value="UniProtKB-UniRule"/>
</dbReference>
<dbReference type="FunFam" id="3.30.160.20:FF:000004">
    <property type="entry name" value="Peptide chain release factor 1"/>
    <property type="match status" value="1"/>
</dbReference>
<dbReference type="FunFam" id="3.30.70.1660:FF:000002">
    <property type="entry name" value="Peptide chain release factor 1"/>
    <property type="match status" value="1"/>
</dbReference>
<dbReference type="Gene3D" id="3.30.160.20">
    <property type="match status" value="1"/>
</dbReference>
<dbReference type="Gene3D" id="3.30.70.1660">
    <property type="match status" value="2"/>
</dbReference>
<dbReference type="Gene3D" id="6.10.140.1950">
    <property type="match status" value="1"/>
</dbReference>
<dbReference type="HAMAP" id="MF_00093">
    <property type="entry name" value="Rel_fac_1"/>
    <property type="match status" value="1"/>
</dbReference>
<dbReference type="InterPro" id="IPR005139">
    <property type="entry name" value="PCRF"/>
</dbReference>
<dbReference type="InterPro" id="IPR000352">
    <property type="entry name" value="Pep_chain_release_fac_I"/>
</dbReference>
<dbReference type="InterPro" id="IPR045853">
    <property type="entry name" value="Pep_chain_release_fac_I_sf"/>
</dbReference>
<dbReference type="InterPro" id="IPR050057">
    <property type="entry name" value="Prokaryotic/Mito_RF"/>
</dbReference>
<dbReference type="InterPro" id="IPR004373">
    <property type="entry name" value="RF-1"/>
</dbReference>
<dbReference type="NCBIfam" id="TIGR00019">
    <property type="entry name" value="prfA"/>
    <property type="match status" value="1"/>
</dbReference>
<dbReference type="NCBIfam" id="NF001859">
    <property type="entry name" value="PRK00591.1"/>
    <property type="match status" value="1"/>
</dbReference>
<dbReference type="PANTHER" id="PTHR43804">
    <property type="entry name" value="LD18447P"/>
    <property type="match status" value="1"/>
</dbReference>
<dbReference type="PANTHER" id="PTHR43804:SF7">
    <property type="entry name" value="LD18447P"/>
    <property type="match status" value="1"/>
</dbReference>
<dbReference type="Pfam" id="PF03462">
    <property type="entry name" value="PCRF"/>
    <property type="match status" value="1"/>
</dbReference>
<dbReference type="Pfam" id="PF00472">
    <property type="entry name" value="RF-1"/>
    <property type="match status" value="1"/>
</dbReference>
<dbReference type="SMART" id="SM00937">
    <property type="entry name" value="PCRF"/>
    <property type="match status" value="1"/>
</dbReference>
<dbReference type="SUPFAM" id="SSF75620">
    <property type="entry name" value="Release factor"/>
    <property type="match status" value="1"/>
</dbReference>
<dbReference type="PROSITE" id="PS00745">
    <property type="entry name" value="RF_PROK_I"/>
    <property type="match status" value="1"/>
</dbReference>
<keyword id="KW-0002">3D-structure</keyword>
<keyword id="KW-0963">Cytoplasm</keyword>
<keyword id="KW-0488">Methylation</keyword>
<keyword id="KW-0648">Protein biosynthesis</keyword>
<keyword id="KW-1185">Reference proteome</keyword>
<feature type="chain" id="PRO_0000177762" description="Peptide chain release factor 1">
    <location>
        <begin position="1"/>
        <end position="354"/>
    </location>
</feature>
<feature type="modified residue" description="N5-methylglutamine" evidence="1">
    <location>
        <position position="230"/>
    </location>
</feature>
<name>RF1_THET8</name>
<accession>P96077</accession>
<accession>Q5SGZ0</accession>
<reference key="1">
    <citation type="journal article" date="1997" name="Biochimie">
        <title>Cloning and overexpression of polypeptide release factor 1 of Thermus thermophilus.</title>
        <authorList>
            <person name="Ito K."/>
            <person name="Nakamura Y."/>
        </authorList>
    </citation>
    <scope>NUCLEOTIDE SEQUENCE [GENOMIC DNA]</scope>
    <scope>FUNCTION</scope>
    <source>
        <strain>ATCC 27634 / DSM 579 / HB8</strain>
    </source>
</reference>
<reference key="2">
    <citation type="submission" date="2004-11" db="EMBL/GenBank/DDBJ databases">
        <title>Complete genome sequence of Thermus thermophilus HB8.</title>
        <authorList>
            <person name="Masui R."/>
            <person name="Kurokawa K."/>
            <person name="Nakagawa N."/>
            <person name="Tokunaga F."/>
            <person name="Koyama Y."/>
            <person name="Shibata T."/>
            <person name="Oshima T."/>
            <person name="Yokoyama S."/>
            <person name="Yasunaga T."/>
            <person name="Kuramitsu S."/>
        </authorList>
    </citation>
    <scope>NUCLEOTIDE SEQUENCE [LARGE SCALE GENOMIC DNA]</scope>
    <source>
        <strain>ATCC 27634 / DSM 579 / HB8</strain>
    </source>
</reference>
<reference evidence="7" key="3">
    <citation type="journal article" date="2005" name="Cell">
        <title>Crystal structures of the ribosome in complex with release factors RF1 and RF2 bound to a cognate stop codon.</title>
        <authorList>
            <person name="Petry S."/>
            <person name="Brodersen D.E."/>
            <person name="Murphy F.V."/>
            <person name="Dunham C.M."/>
            <person name="Selmer M."/>
            <person name="Tarry M.J."/>
            <person name="Kelley A.C."/>
            <person name="Ramakrishnan V."/>
        </authorList>
    </citation>
    <scope>X-RAY CRYSTALLOGRAPHY (5.90 ANGSTROMS) OF 28-378 IN COMPLEX WITH 70S RIBOSOME</scope>
    <scope>FUNCTION</scope>
    <scope>SUBUNIT</scope>
</reference>
<organism>
    <name type="scientific">Thermus thermophilus (strain ATCC 27634 / DSM 579 / HB8)</name>
    <dbReference type="NCBI Taxonomy" id="300852"/>
    <lineage>
        <taxon>Bacteria</taxon>
        <taxon>Thermotogati</taxon>
        <taxon>Deinococcota</taxon>
        <taxon>Deinococci</taxon>
        <taxon>Thermales</taxon>
        <taxon>Thermaceae</taxon>
        <taxon>Thermus</taxon>
    </lineage>
</organism>
<protein>
    <recommendedName>
        <fullName>Peptide chain release factor 1</fullName>
        <shortName>RF-1</shortName>
    </recommendedName>
</protein>
<gene>
    <name evidence="3" type="primary">prfA</name>
    <name type="ordered locus">TTHA1940</name>
</gene>
<sequence>MLDKLDRLEEEYRELEALLSDPEVLKDKGRYQSLSRRYAEMGEVIGLIREYRKVLEDLEQAESLLDDPELKEMAKAEREALLARKEALEKELERHLLPKDPMDERDAIVEIRAGTGGEEAALFARDLFNMYLRFAEEMGFETEVLDSHPTDLGGFSKVVFEVRGPGAYGTFKYESGVHRVQRVPVTETQGRIHTSTATVAVLPKAEEEDFALNMDEIRIDVMRASGPGGQGVNTTDSAVRVVHLPTGIMVTCQDSRSQIKNREKALMILRSRLLEMKRAEEAERLRKTRLAQIGTGERSEKIRTYNFPQSRVTDHRIGFTTHDLEGVLSGHLTPILEALKRADQERQLAALAEG</sequence>
<proteinExistence type="evidence at protein level"/>